<sequence length="379" mass="41105">MARSGYTLPVFACAAAIAALQHLKNLQAELDPIEGPLHSVTLDLINPPQTVEIAIEQVAKLGPGTALAISRSDPGDNLDITRNTPIWAVVTWAEDQQLDSIVIEGGEGIGRLSSTNDRAAIYAYAQHLLQTNLQKLLNSTEKIRVTIILPEGRSLAQRTSNAAFGIVDGLSLLGTSGISQPLSAPEQLEQFQTQLQQKAEQRKHLVFCLGENGLDLAQKLGIDTACLIKTANWIGPMLVAASLEGVEGILLLGYHGKLIKLAGGIFHTHHYVADARQEILTAYAATLGLPQTDLNVVFNSPTTEAALQHLRHLDQTTGSQWVAQIYTELVRQIDQRSQTYIQSQTNHRVIIGSILFDQQRQIIVSSPGGTALREQVTMA</sequence>
<evidence type="ECO:0000255" key="1">
    <source>
        <dbReference type="HAMAP-Rule" id="MF_00787"/>
    </source>
</evidence>
<keyword id="KW-0169">Cobalamin biosynthesis</keyword>
<keyword id="KW-0489">Methyltransferase</keyword>
<keyword id="KW-0949">S-adenosyl-L-methionine</keyword>
<keyword id="KW-0808">Transferase</keyword>
<protein>
    <recommendedName>
        <fullName evidence="1">Cobalt-precorrin-5B C(1)-methyltransferase</fullName>
        <ecNumber evidence="1">2.1.1.195</ecNumber>
    </recommendedName>
    <alternativeName>
        <fullName evidence="1">Cobalt-precorrin-6A synthase</fullName>
    </alternativeName>
</protein>
<organism>
    <name type="scientific">Cyanothece sp. (strain PCC 7425 / ATCC 29141)</name>
    <dbReference type="NCBI Taxonomy" id="395961"/>
    <lineage>
        <taxon>Bacteria</taxon>
        <taxon>Bacillati</taxon>
        <taxon>Cyanobacteriota</taxon>
        <taxon>Cyanophyceae</taxon>
        <taxon>Gomontiellales</taxon>
        <taxon>Cyanothecaceae</taxon>
        <taxon>Cyanothece</taxon>
    </lineage>
</organism>
<reference key="1">
    <citation type="journal article" date="2011" name="MBio">
        <title>Novel metabolic attributes of the genus Cyanothece, comprising a group of unicellular nitrogen-fixing Cyanobacteria.</title>
        <authorList>
            <person name="Bandyopadhyay A."/>
            <person name="Elvitigala T."/>
            <person name="Welsh E."/>
            <person name="Stockel J."/>
            <person name="Liberton M."/>
            <person name="Min H."/>
            <person name="Sherman L.A."/>
            <person name="Pakrasi H.B."/>
        </authorList>
    </citation>
    <scope>NUCLEOTIDE SEQUENCE [LARGE SCALE GENOMIC DNA]</scope>
    <source>
        <strain>PCC 7425 / ATCC 29141</strain>
    </source>
</reference>
<proteinExistence type="inferred from homology"/>
<name>CBID_CYAP4</name>
<comment type="function">
    <text evidence="1">Catalyzes the methylation of C-1 in cobalt-precorrin-5B to form cobalt-precorrin-6A.</text>
</comment>
<comment type="catalytic activity">
    <reaction evidence="1">
        <text>Co-precorrin-5B + S-adenosyl-L-methionine = Co-precorrin-6A + S-adenosyl-L-homocysteine</text>
        <dbReference type="Rhea" id="RHEA:26285"/>
        <dbReference type="ChEBI" id="CHEBI:57856"/>
        <dbReference type="ChEBI" id="CHEBI:59789"/>
        <dbReference type="ChEBI" id="CHEBI:60063"/>
        <dbReference type="ChEBI" id="CHEBI:60064"/>
        <dbReference type="EC" id="2.1.1.195"/>
    </reaction>
</comment>
<comment type="pathway">
    <text evidence="1">Cofactor biosynthesis; adenosylcobalamin biosynthesis; cob(II)yrinate a,c-diamide from sirohydrochlorin (anaerobic route): step 6/10.</text>
</comment>
<comment type="similarity">
    <text evidence="1">Belongs to the CbiD family.</text>
</comment>
<feature type="chain" id="PRO_1000148479" description="Cobalt-precorrin-5B C(1)-methyltransferase">
    <location>
        <begin position="1"/>
        <end position="379"/>
    </location>
</feature>
<accession>B8HS30</accession>
<dbReference type="EC" id="2.1.1.195" evidence="1"/>
<dbReference type="EMBL" id="CP001344">
    <property type="protein sequence ID" value="ACL42689.1"/>
    <property type="molecule type" value="Genomic_DNA"/>
</dbReference>
<dbReference type="SMR" id="B8HS30"/>
<dbReference type="STRING" id="395961.Cyan7425_0295"/>
<dbReference type="KEGG" id="cyn:Cyan7425_0295"/>
<dbReference type="eggNOG" id="COG1903">
    <property type="taxonomic scope" value="Bacteria"/>
</dbReference>
<dbReference type="HOGENOM" id="CLU_041273_1_2_3"/>
<dbReference type="OrthoDB" id="6439987at2"/>
<dbReference type="UniPathway" id="UPA00148">
    <property type="reaction ID" value="UER00227"/>
</dbReference>
<dbReference type="GO" id="GO:0043780">
    <property type="term" value="F:cobalt-precorrin-5B C1-methyltransferase activity"/>
    <property type="evidence" value="ECO:0007669"/>
    <property type="project" value="RHEA"/>
</dbReference>
<dbReference type="GO" id="GO:0019251">
    <property type="term" value="P:anaerobic cobalamin biosynthetic process"/>
    <property type="evidence" value="ECO:0007669"/>
    <property type="project" value="UniProtKB-UniRule"/>
</dbReference>
<dbReference type="GO" id="GO:0032259">
    <property type="term" value="P:methylation"/>
    <property type="evidence" value="ECO:0007669"/>
    <property type="project" value="UniProtKB-KW"/>
</dbReference>
<dbReference type="Gene3D" id="3.30.2110.10">
    <property type="entry name" value="CbiD-like"/>
    <property type="match status" value="1"/>
</dbReference>
<dbReference type="HAMAP" id="MF_00787">
    <property type="entry name" value="CbiD"/>
    <property type="match status" value="1"/>
</dbReference>
<dbReference type="InterPro" id="IPR002748">
    <property type="entry name" value="CbiD"/>
</dbReference>
<dbReference type="InterPro" id="IPR036074">
    <property type="entry name" value="CbiD_sf"/>
</dbReference>
<dbReference type="NCBIfam" id="TIGR00312">
    <property type="entry name" value="cbiD"/>
    <property type="match status" value="1"/>
</dbReference>
<dbReference type="PANTHER" id="PTHR35863">
    <property type="entry name" value="COBALT-PRECORRIN-5B C(1)-METHYLTRANSFERASE"/>
    <property type="match status" value="1"/>
</dbReference>
<dbReference type="PANTHER" id="PTHR35863:SF1">
    <property type="entry name" value="COBALT-PRECORRIN-5B C(1)-METHYLTRANSFERASE"/>
    <property type="match status" value="1"/>
</dbReference>
<dbReference type="Pfam" id="PF01888">
    <property type="entry name" value="CbiD"/>
    <property type="match status" value="1"/>
</dbReference>
<dbReference type="PIRSF" id="PIRSF026782">
    <property type="entry name" value="CbiD"/>
    <property type="match status" value="1"/>
</dbReference>
<dbReference type="SUPFAM" id="SSF111342">
    <property type="entry name" value="CbiD-like"/>
    <property type="match status" value="1"/>
</dbReference>
<gene>
    <name evidence="1" type="primary">cbiD</name>
    <name type="ordered locus">Cyan7425_0295</name>
</gene>